<sequence length="218" mass="24489">MGTRDDEYDYLFKVVLIGDSGVGKSNLLSRFTRNEFNLESKSTIGVEFATRSIQVDGKTIKAQIWDTAGQERYRAITSAYYRGAVGALLVYDIAKHLTYENVERWLKELRDHADSNIVIMLVGNKSDLRHLRAVPTDEARAFAEKNNLSFIETSALDSTNVEEAFKNILTEIYRIVSQKQIADRAAHDESPGNNVVDISVPPTTDGQRPNKLQCCQSL</sequence>
<keyword id="KW-0007">Acetylation</keyword>
<keyword id="KW-0164">Citrullination</keyword>
<keyword id="KW-0968">Cytoplasmic vesicle</keyword>
<keyword id="KW-0903">Direct protein sequencing</keyword>
<keyword id="KW-0967">Endosome</keyword>
<keyword id="KW-0342">GTP-binding</keyword>
<keyword id="KW-0378">Hydrolase</keyword>
<keyword id="KW-0449">Lipoprotein</keyword>
<keyword id="KW-0460">Magnesium</keyword>
<keyword id="KW-0472">Membrane</keyword>
<keyword id="KW-0479">Metal-binding</keyword>
<keyword id="KW-0488">Methylation</keyword>
<keyword id="KW-0547">Nucleotide-binding</keyword>
<keyword id="KW-0636">Prenylation</keyword>
<keyword id="KW-0653">Protein transport</keyword>
<keyword id="KW-1185">Reference proteome</keyword>
<keyword id="KW-0770">Synapse</keyword>
<keyword id="KW-0813">Transport</keyword>
<evidence type="ECO:0000250" key="1">
    <source>
        <dbReference type="UniProtKB" id="O35509"/>
    </source>
</evidence>
<evidence type="ECO:0000250" key="2">
    <source>
        <dbReference type="UniProtKB" id="P51157"/>
    </source>
</evidence>
<evidence type="ECO:0000250" key="3">
    <source>
        <dbReference type="UniProtKB" id="Q15907"/>
    </source>
</evidence>
<evidence type="ECO:0000256" key="4">
    <source>
        <dbReference type="SAM" id="MobiDB-lite"/>
    </source>
</evidence>
<evidence type="ECO:0000269" key="5">
    <source>
    </source>
</evidence>
<evidence type="ECO:0000269" key="6">
    <source>
    </source>
</evidence>
<evidence type="ECO:0000269" key="7">
    <source>
    </source>
</evidence>
<evidence type="ECO:0000269" key="8">
    <source>
    </source>
</evidence>
<evidence type="ECO:0000269" key="9">
    <source>
    </source>
</evidence>
<evidence type="ECO:0000269" key="10">
    <source>
    </source>
</evidence>
<evidence type="ECO:0000269" key="11">
    <source>
    </source>
</evidence>
<evidence type="ECO:0000305" key="12"/>
<evidence type="ECO:0000305" key="13">
    <source>
    </source>
</evidence>
<evidence type="ECO:0000312" key="14">
    <source>
        <dbReference type="MGI" id="MGI:99425"/>
    </source>
</evidence>
<gene>
    <name evidence="14" type="primary">Rab11b</name>
</gene>
<proteinExistence type="evidence at protein level"/>
<reference key="1">
    <citation type="journal article" date="1994" name="Genomics">
        <title>Molecular analysis of mouse Rab11b: a new type of mammalian YPT/Rab protein.</title>
        <authorList>
            <person name="Lai F."/>
            <person name="Stubbs L."/>
            <person name="Artzt K."/>
        </authorList>
    </citation>
    <scope>NUCLEOTIDE SEQUENCE [MRNA]</scope>
    <source>
        <tissue>Testis</tissue>
    </source>
</reference>
<reference key="2">
    <citation type="journal article" date="2004" name="Genome Res.">
        <title>The status, quality, and expansion of the NIH full-length cDNA project: the Mammalian Gene Collection (MGC).</title>
        <authorList>
            <consortium name="The MGC Project Team"/>
        </authorList>
    </citation>
    <scope>NUCLEOTIDE SEQUENCE [LARGE SCALE MRNA]</scope>
    <source>
        <strain>C57BL/6J</strain>
        <strain>FVB/N</strain>
        <tissue>Brain</tissue>
        <tissue>Colon</tissue>
    </source>
</reference>
<reference key="3">
    <citation type="submission" date="2007-04" db="UniProtKB">
        <authorList>
            <person name="Lubec G."/>
            <person name="Kang S.U."/>
        </authorList>
    </citation>
    <scope>PROTEIN SEQUENCE OF 5-24; 42-51; 62-72; 75-104; 111-125 AND 167-174</scope>
    <scope>IDENTIFICATION BY MASS SPECTROMETRY</scope>
    <source>
        <strain>C57BL/6J</strain>
        <tissue>Brain</tissue>
    </source>
</reference>
<reference key="4">
    <citation type="journal article" date="2000" name="Exp. Cell Res.">
        <title>Rab11b is essential for recycling of transferrin to the plasma membrane.</title>
        <authorList>
            <person name="Schlierf B."/>
            <person name="Fey G.H."/>
            <person name="Hauber J."/>
            <person name="Hocke G.M."/>
            <person name="Rosorius O."/>
        </authorList>
    </citation>
    <scope>FUNCTION IN ENDOCYTIC RECYCLING</scope>
    <scope>CATALYTIC ACTIVITY</scope>
    <scope>SUBCELLULAR LOCATION</scope>
    <scope>TOPOLOGY</scope>
    <scope>MUTAGENESIS OF SER-25 AND GLN-70</scope>
</reference>
<reference key="5">
    <citation type="journal article" date="2009" name="Genes Cells">
        <title>Rab11 and its effector Rip11 participate in regulation of insulin granule exocytosis.</title>
        <authorList>
            <person name="Sugawara K."/>
            <person name="Shibasaki T."/>
            <person name="Mizoguchi A."/>
            <person name="Saito T."/>
            <person name="Seino S."/>
        </authorList>
    </citation>
    <scope>FUNCTION IN EXOCYTOSIS</scope>
    <scope>TISSUE SPECIFICITY</scope>
</reference>
<reference key="6">
    <citation type="journal article" date="2010" name="Cell">
        <title>A tissue-specific atlas of mouse protein phosphorylation and expression.</title>
        <authorList>
            <person name="Huttlin E.L."/>
            <person name="Jedrychowski M.P."/>
            <person name="Elias J.E."/>
            <person name="Goswami T."/>
            <person name="Rad R."/>
            <person name="Beausoleil S.A."/>
            <person name="Villen J."/>
            <person name="Haas W."/>
            <person name="Sowa M.E."/>
            <person name="Gygi S.P."/>
        </authorList>
    </citation>
    <scope>IDENTIFICATION BY MASS SPECTROMETRY [LARGE SCALE ANALYSIS]</scope>
    <source>
        <tissue>Brain</tissue>
        <tissue>Brown adipose tissue</tissue>
        <tissue>Heart</tissue>
        <tissue>Kidney</tissue>
        <tissue>Liver</tissue>
        <tissue>Lung</tissue>
        <tissue>Pancreas</tissue>
        <tissue>Spleen</tissue>
        <tissue>Testis</tissue>
    </source>
</reference>
<reference key="7">
    <citation type="journal article" date="2011" name="Traffic">
        <title>The recycling endosome protein Rab17 regulates melanocytic filopodia formation and melanosome trafficking.</title>
        <authorList>
            <person name="Beaumont K.A."/>
            <person name="Hamilton N.A."/>
            <person name="Moores M.T."/>
            <person name="Brown D.L."/>
            <person name="Ohbayashi N."/>
            <person name="Cairncross O."/>
            <person name="Cook A.L."/>
            <person name="Smith A.G."/>
            <person name="Misaki R."/>
            <person name="Fukuda M."/>
            <person name="Taguchi T."/>
            <person name="Sturm R.A."/>
            <person name="Stow J.L."/>
        </authorList>
    </citation>
    <scope>FUNCTION IN MELANOSOME TRANSPORT</scope>
</reference>
<reference key="8">
    <citation type="journal article" date="2012" name="Am. J. Physiol.">
        <title>Rab11b regulates the trafficking and recycling of the epithelial sodium channel (ENaC).</title>
        <authorList>
            <person name="Butterworth M.B."/>
            <person name="Edinger R.S."/>
            <person name="Silvis M.R."/>
            <person name="Gallo L.I."/>
            <person name="Liang X."/>
            <person name="Apodaca G."/>
            <person name="Frizzell R.A."/>
            <person name="Fizzell R.A."/>
            <person name="Johnson J.P."/>
        </authorList>
    </citation>
    <scope>FUNCTION</scope>
</reference>
<reference key="9">
    <citation type="journal article" date="2012" name="Biochem. Biophys. Res. Commun.">
        <title>The large conductance calcium-activated K(+) channel interacts with the small GTPase Rab11b.</title>
        <authorList>
            <person name="Sokolowski S."/>
            <person name="Harvey M."/>
            <person name="Sakai Y."/>
            <person name="Jordan A."/>
            <person name="Sokolowski B."/>
        </authorList>
    </citation>
    <scope>INTERACTION WITH KCNMA1</scope>
</reference>
<reference key="10">
    <citation type="journal article" date="2014" name="Nature">
        <title>Citrullination regulates pluripotency and histone H1 binding to chromatin.</title>
        <authorList>
            <person name="Christophorou M.A."/>
            <person name="Castelo-Branco G."/>
            <person name="Halley-Stott R.P."/>
            <person name="Oliveira C.S."/>
            <person name="Loos R."/>
            <person name="Radzisheuskaya A."/>
            <person name="Mowen K.A."/>
            <person name="Bertone P."/>
            <person name="Silva J.C."/>
            <person name="Zernicka-Goetz M."/>
            <person name="Nielsen M.L."/>
            <person name="Gurdon J.B."/>
            <person name="Kouzarides T."/>
        </authorList>
    </citation>
    <scope>CITRULLINATION AT ARG-4</scope>
</reference>
<reference key="11">
    <citation type="journal article" date="2018" name="J. Cell Biol.">
        <title>The Rab11-binding protein RELCH/KIAA1468 controls intracellular cholesterol distribution.</title>
        <authorList>
            <person name="Sobajima T."/>
            <person name="Yoshimura S.I."/>
            <person name="Maeda T."/>
            <person name="Miyata H."/>
            <person name="Miyoshi E."/>
            <person name="Harada A."/>
        </authorList>
    </citation>
    <scope>INTERACTION WITH RELCH</scope>
</reference>
<feature type="initiator methionine" description="Removed" evidence="3">
    <location>
        <position position="1"/>
    </location>
</feature>
<feature type="chain" id="PRO_0000121159" description="Ras-related protein Rab-11B">
    <location>
        <begin position="2"/>
        <end position="215"/>
    </location>
</feature>
<feature type="propeptide" id="PRO_0000370816" description="Removed in mature form" evidence="2">
    <location>
        <begin position="216"/>
        <end position="218"/>
    </location>
</feature>
<feature type="region of interest" description="Disordered" evidence="4">
    <location>
        <begin position="184"/>
        <end position="218"/>
    </location>
</feature>
<feature type="short sequence motif" description="Switch 1" evidence="3">
    <location>
        <begin position="36"/>
        <end position="47"/>
    </location>
</feature>
<feature type="short sequence motif" description="Switch 2" evidence="3">
    <location>
        <begin position="67"/>
        <end position="86"/>
    </location>
</feature>
<feature type="binding site" evidence="3">
    <location>
        <position position="20"/>
    </location>
    <ligand>
        <name>GTP</name>
        <dbReference type="ChEBI" id="CHEBI:37565"/>
    </ligand>
</feature>
<feature type="binding site" evidence="3">
    <location>
        <position position="21"/>
    </location>
    <ligand>
        <name>GTP</name>
        <dbReference type="ChEBI" id="CHEBI:37565"/>
    </ligand>
</feature>
<feature type="binding site" evidence="3">
    <location>
        <position position="23"/>
    </location>
    <ligand>
        <name>GTP</name>
        <dbReference type="ChEBI" id="CHEBI:37565"/>
    </ligand>
</feature>
<feature type="binding site" evidence="3">
    <location>
        <position position="24"/>
    </location>
    <ligand>
        <name>GTP</name>
        <dbReference type="ChEBI" id="CHEBI:37565"/>
    </ligand>
</feature>
<feature type="binding site" evidence="3">
    <location>
        <position position="25"/>
    </location>
    <ligand>
        <name>GTP</name>
        <dbReference type="ChEBI" id="CHEBI:37565"/>
    </ligand>
</feature>
<feature type="binding site" evidence="3">
    <location>
        <position position="25"/>
    </location>
    <ligand>
        <name>Mg(2+)</name>
        <dbReference type="ChEBI" id="CHEBI:18420"/>
    </ligand>
</feature>
<feature type="binding site" evidence="3">
    <location>
        <position position="26"/>
    </location>
    <ligand>
        <name>GTP</name>
        <dbReference type="ChEBI" id="CHEBI:37565"/>
    </ligand>
</feature>
<feature type="binding site" evidence="3">
    <location>
        <position position="37"/>
    </location>
    <ligand>
        <name>GTP</name>
        <dbReference type="ChEBI" id="CHEBI:37565"/>
    </ligand>
</feature>
<feature type="binding site" evidence="3">
    <location>
        <position position="38"/>
    </location>
    <ligand>
        <name>GTP</name>
        <dbReference type="ChEBI" id="CHEBI:37565"/>
    </ligand>
</feature>
<feature type="binding site" evidence="3">
    <location>
        <position position="40"/>
    </location>
    <ligand>
        <name>GTP</name>
        <dbReference type="ChEBI" id="CHEBI:37565"/>
    </ligand>
</feature>
<feature type="binding site" evidence="3">
    <location>
        <position position="42"/>
    </location>
    <ligand>
        <name>GTP</name>
        <dbReference type="ChEBI" id="CHEBI:37565"/>
    </ligand>
</feature>
<feature type="binding site" evidence="3">
    <location>
        <position position="43"/>
    </location>
    <ligand>
        <name>GTP</name>
        <dbReference type="ChEBI" id="CHEBI:37565"/>
    </ligand>
</feature>
<feature type="binding site" evidence="3">
    <location>
        <position position="43"/>
    </location>
    <ligand>
        <name>Mg(2+)</name>
        <dbReference type="ChEBI" id="CHEBI:18420"/>
    </ligand>
</feature>
<feature type="binding site" evidence="3">
    <location>
        <position position="66"/>
    </location>
    <ligand>
        <name>Mg(2+)</name>
        <dbReference type="ChEBI" id="CHEBI:18420"/>
    </ligand>
</feature>
<feature type="binding site" evidence="3">
    <location>
        <position position="69"/>
    </location>
    <ligand>
        <name>GTP</name>
        <dbReference type="ChEBI" id="CHEBI:37565"/>
    </ligand>
</feature>
<feature type="binding site" evidence="3">
    <location>
        <position position="124"/>
    </location>
    <ligand>
        <name>GTP</name>
        <dbReference type="ChEBI" id="CHEBI:37565"/>
    </ligand>
</feature>
<feature type="binding site" evidence="3">
    <location>
        <position position="125"/>
    </location>
    <ligand>
        <name>GTP</name>
        <dbReference type="ChEBI" id="CHEBI:37565"/>
    </ligand>
</feature>
<feature type="binding site" evidence="3">
    <location>
        <position position="127"/>
    </location>
    <ligand>
        <name>GTP</name>
        <dbReference type="ChEBI" id="CHEBI:37565"/>
    </ligand>
</feature>
<feature type="binding site" evidence="3">
    <location>
        <position position="155"/>
    </location>
    <ligand>
        <name>GTP</name>
        <dbReference type="ChEBI" id="CHEBI:37565"/>
    </ligand>
</feature>
<feature type="binding site" evidence="3">
    <location>
        <position position="156"/>
    </location>
    <ligand>
        <name>GTP</name>
        <dbReference type="ChEBI" id="CHEBI:37565"/>
    </ligand>
</feature>
<feature type="modified residue" description="N-acetylglycine" evidence="3">
    <location>
        <position position="2"/>
    </location>
</feature>
<feature type="modified residue" description="Citrulline" evidence="10">
    <location>
        <position position="4"/>
    </location>
</feature>
<feature type="modified residue" description="Cysteine methyl ester" evidence="2">
    <location>
        <position position="215"/>
    </location>
</feature>
<feature type="lipid moiety-binding region" description="S-geranylgeranyl cysteine" evidence="3">
    <location>
        <position position="214"/>
    </location>
</feature>
<feature type="lipid moiety-binding region" description="S-geranylgeranyl cysteine" evidence="3">
    <location>
        <position position="215"/>
    </location>
</feature>
<feature type="mutagenesis site" description="Dominant negative mutant locked in the inactive GDP-bound form; partially relocalizes to the Golgi and alters endocytic recycling." evidence="5">
    <original>S</original>
    <variation>N</variation>
    <location>
        <position position="25"/>
    </location>
</feature>
<feature type="mutagenesis site" description="Constitutively active mutant locked in the active GTP-bound form; alters endocytic recycling." evidence="5">
    <original>Q</original>
    <variation>L</variation>
    <location>
        <position position="70"/>
    </location>
</feature>
<organism>
    <name type="scientific">Mus musculus</name>
    <name type="common">Mouse</name>
    <dbReference type="NCBI Taxonomy" id="10090"/>
    <lineage>
        <taxon>Eukaryota</taxon>
        <taxon>Metazoa</taxon>
        <taxon>Chordata</taxon>
        <taxon>Craniata</taxon>
        <taxon>Vertebrata</taxon>
        <taxon>Euteleostomi</taxon>
        <taxon>Mammalia</taxon>
        <taxon>Eutheria</taxon>
        <taxon>Euarchontoglires</taxon>
        <taxon>Glires</taxon>
        <taxon>Rodentia</taxon>
        <taxon>Myomorpha</taxon>
        <taxon>Muroidea</taxon>
        <taxon>Muridae</taxon>
        <taxon>Murinae</taxon>
        <taxon>Mus</taxon>
        <taxon>Mus</taxon>
    </lineage>
</organism>
<name>RB11B_MOUSE</name>
<protein>
    <recommendedName>
        <fullName>Ras-related protein Rab-11B</fullName>
        <ecNumber evidence="5">3.6.5.2</ecNumber>
    </recommendedName>
</protein>
<accession>P46638</accession>
<dbReference type="EC" id="3.6.5.2" evidence="5"/>
<dbReference type="EMBL" id="L26528">
    <property type="protein sequence ID" value="AAC42093.1"/>
    <property type="molecule type" value="mRNA"/>
</dbReference>
<dbReference type="EMBL" id="BC054753">
    <property type="protein sequence ID" value="AAH54753.1"/>
    <property type="molecule type" value="mRNA"/>
</dbReference>
<dbReference type="EMBL" id="BC085270">
    <property type="protein sequence ID" value="AAH85270.1"/>
    <property type="molecule type" value="mRNA"/>
</dbReference>
<dbReference type="CCDS" id="CCDS28628.1"/>
<dbReference type="PIR" id="A55005">
    <property type="entry name" value="A55005"/>
</dbReference>
<dbReference type="RefSeq" id="NP_033023.1">
    <property type="nucleotide sequence ID" value="NM_008997.3"/>
</dbReference>
<dbReference type="SMR" id="P46638"/>
<dbReference type="BioGRID" id="202532">
    <property type="interactions" value="14"/>
</dbReference>
<dbReference type="FunCoup" id="P46638">
    <property type="interactions" value="3809"/>
</dbReference>
<dbReference type="IntAct" id="P46638">
    <property type="interactions" value="14"/>
</dbReference>
<dbReference type="MINT" id="P46638"/>
<dbReference type="STRING" id="10090.ENSMUSP00000110021"/>
<dbReference type="GlyGen" id="P46638">
    <property type="glycosylation" value="1 site, 1 O-linked glycan (1 site)"/>
</dbReference>
<dbReference type="iPTMnet" id="P46638"/>
<dbReference type="PhosphoSitePlus" id="P46638"/>
<dbReference type="jPOST" id="P46638"/>
<dbReference type="PaxDb" id="10090-ENSMUSP00000110021"/>
<dbReference type="PeptideAtlas" id="P46638"/>
<dbReference type="ProteomicsDB" id="300245"/>
<dbReference type="Pumba" id="P46638"/>
<dbReference type="TopDownProteomics" id="P46638"/>
<dbReference type="Antibodypedia" id="24871">
    <property type="antibodies" value="185 antibodies from 30 providers"/>
</dbReference>
<dbReference type="DNASU" id="19326"/>
<dbReference type="Ensembl" id="ENSMUST00000057373.14">
    <property type="protein sequence ID" value="ENSMUSP00000110021.5"/>
    <property type="gene ID" value="ENSMUSG00000077450.14"/>
</dbReference>
<dbReference type="GeneID" id="19326"/>
<dbReference type="KEGG" id="mmu:19326"/>
<dbReference type="UCSC" id="uc008bzm.1">
    <property type="organism name" value="mouse"/>
</dbReference>
<dbReference type="AGR" id="MGI:99425"/>
<dbReference type="CTD" id="9230"/>
<dbReference type="MGI" id="MGI:99425">
    <property type="gene designation" value="Rab11b"/>
</dbReference>
<dbReference type="VEuPathDB" id="HostDB:ENSMUSG00000077450"/>
<dbReference type="eggNOG" id="KOG0087">
    <property type="taxonomic scope" value="Eukaryota"/>
</dbReference>
<dbReference type="GeneTree" id="ENSGT00940000161659"/>
<dbReference type="HOGENOM" id="CLU_041217_23_0_1"/>
<dbReference type="InParanoid" id="P46638"/>
<dbReference type="OMA" id="FRMHQMS"/>
<dbReference type="OrthoDB" id="9989112at2759"/>
<dbReference type="PhylomeDB" id="P46638"/>
<dbReference type="TreeFam" id="TF300099"/>
<dbReference type="Reactome" id="R-MMU-8854214">
    <property type="pathway name" value="TBC/RABGAPs"/>
</dbReference>
<dbReference type="Reactome" id="R-MMU-8873719">
    <property type="pathway name" value="RAB geranylgeranylation"/>
</dbReference>
<dbReference type="BioGRID-ORCS" id="19326">
    <property type="hits" value="8 hits in 79 CRISPR screens"/>
</dbReference>
<dbReference type="CD-CODE" id="CE726F99">
    <property type="entry name" value="Postsynaptic density"/>
</dbReference>
<dbReference type="ChiTaRS" id="Rab11b">
    <property type="organism name" value="mouse"/>
</dbReference>
<dbReference type="PRO" id="PR:P46638"/>
<dbReference type="Proteomes" id="UP000000589">
    <property type="component" value="Chromosome 17"/>
</dbReference>
<dbReference type="RNAct" id="P46638">
    <property type="molecule type" value="protein"/>
</dbReference>
<dbReference type="Bgee" id="ENSMUSG00000077450">
    <property type="expression patterns" value="Expressed in cortical plate and 225 other cell types or tissues"/>
</dbReference>
<dbReference type="ExpressionAtlas" id="P46638">
    <property type="expression patterns" value="baseline and differential"/>
</dbReference>
<dbReference type="GO" id="GO:0005737">
    <property type="term" value="C:cytoplasm"/>
    <property type="evidence" value="ECO:0000314"/>
    <property type="project" value="MGI"/>
</dbReference>
<dbReference type="GO" id="GO:0031410">
    <property type="term" value="C:cytoplasmic vesicle"/>
    <property type="evidence" value="ECO:0000266"/>
    <property type="project" value="MGI"/>
</dbReference>
<dbReference type="GO" id="GO:0005739">
    <property type="term" value="C:mitochondrion"/>
    <property type="evidence" value="ECO:0007005"/>
    <property type="project" value="MGI"/>
</dbReference>
<dbReference type="GO" id="GO:0045335">
    <property type="term" value="C:phagocytic vesicle"/>
    <property type="evidence" value="ECO:0000250"/>
    <property type="project" value="UniProtKB"/>
</dbReference>
<dbReference type="GO" id="GO:0030670">
    <property type="term" value="C:phagocytic vesicle membrane"/>
    <property type="evidence" value="ECO:0007669"/>
    <property type="project" value="UniProtKB-SubCell"/>
</dbReference>
<dbReference type="GO" id="GO:0055037">
    <property type="term" value="C:recycling endosome"/>
    <property type="evidence" value="ECO:0000314"/>
    <property type="project" value="UniProtKB"/>
</dbReference>
<dbReference type="GO" id="GO:0055038">
    <property type="term" value="C:recycling endosome membrane"/>
    <property type="evidence" value="ECO:0000314"/>
    <property type="project" value="UniProtKB"/>
</dbReference>
<dbReference type="GO" id="GO:0008021">
    <property type="term" value="C:synaptic vesicle"/>
    <property type="evidence" value="ECO:0000250"/>
    <property type="project" value="UniProtKB"/>
</dbReference>
<dbReference type="GO" id="GO:0030672">
    <property type="term" value="C:synaptic vesicle membrane"/>
    <property type="evidence" value="ECO:0007669"/>
    <property type="project" value="UniProtKB-SubCell"/>
</dbReference>
<dbReference type="GO" id="GO:0003925">
    <property type="term" value="F:G protein activity"/>
    <property type="evidence" value="ECO:0007669"/>
    <property type="project" value="UniProtKB-EC"/>
</dbReference>
<dbReference type="GO" id="GO:0019003">
    <property type="term" value="F:GDP binding"/>
    <property type="evidence" value="ECO:0000250"/>
    <property type="project" value="UniProtKB"/>
</dbReference>
<dbReference type="GO" id="GO:0005525">
    <property type="term" value="F:GTP binding"/>
    <property type="evidence" value="ECO:0000314"/>
    <property type="project" value="UniProtKB"/>
</dbReference>
<dbReference type="GO" id="GO:0003924">
    <property type="term" value="F:GTPase activity"/>
    <property type="evidence" value="ECO:0000315"/>
    <property type="project" value="UniProtKB"/>
</dbReference>
<dbReference type="GO" id="GO:0031489">
    <property type="term" value="F:myosin V binding"/>
    <property type="evidence" value="ECO:0007669"/>
    <property type="project" value="Ensembl"/>
</dbReference>
<dbReference type="GO" id="GO:0150093">
    <property type="term" value="P:amyloid-beta clearance by transcytosis"/>
    <property type="evidence" value="ECO:0007669"/>
    <property type="project" value="Ensembl"/>
</dbReference>
<dbReference type="GO" id="GO:0071468">
    <property type="term" value="P:cellular response to acidic pH"/>
    <property type="evidence" value="ECO:0000250"/>
    <property type="project" value="UniProtKB"/>
</dbReference>
<dbReference type="GO" id="GO:0045054">
    <property type="term" value="P:constitutive secretory pathway"/>
    <property type="evidence" value="ECO:0000250"/>
    <property type="project" value="UniProtKB"/>
</dbReference>
<dbReference type="GO" id="GO:0032456">
    <property type="term" value="P:endocytic recycling"/>
    <property type="evidence" value="ECO:0000250"/>
    <property type="project" value="UniProtKB"/>
</dbReference>
<dbReference type="GO" id="GO:0090150">
    <property type="term" value="P:establishment of protein localization to membrane"/>
    <property type="evidence" value="ECO:0007669"/>
    <property type="project" value="Ensembl"/>
</dbReference>
<dbReference type="GO" id="GO:0035773">
    <property type="term" value="P:insulin secretion involved in cellular response to glucose stimulus"/>
    <property type="evidence" value="ECO:0000315"/>
    <property type="project" value="UniProtKB"/>
</dbReference>
<dbReference type="GO" id="GO:0032402">
    <property type="term" value="P:melanosome transport"/>
    <property type="evidence" value="ECO:0000315"/>
    <property type="project" value="UniProtKB"/>
</dbReference>
<dbReference type="GO" id="GO:0001881">
    <property type="term" value="P:receptor recycling"/>
    <property type="evidence" value="ECO:0000315"/>
    <property type="project" value="UniProtKB"/>
</dbReference>
<dbReference type="GO" id="GO:0045055">
    <property type="term" value="P:regulated exocytosis"/>
    <property type="evidence" value="ECO:0000315"/>
    <property type="project" value="UniProtKB"/>
</dbReference>
<dbReference type="GO" id="GO:2001135">
    <property type="term" value="P:regulation of endocytic recycling"/>
    <property type="evidence" value="ECO:0000315"/>
    <property type="project" value="UniProtKB"/>
</dbReference>
<dbReference type="GO" id="GO:0044070">
    <property type="term" value="P:regulation of monoatomic anion transport"/>
    <property type="evidence" value="ECO:0000250"/>
    <property type="project" value="UniProtKB"/>
</dbReference>
<dbReference type="GO" id="GO:2000008">
    <property type="term" value="P:regulation of protein localization to cell surface"/>
    <property type="evidence" value="ECO:0000250"/>
    <property type="project" value="UniProtKB"/>
</dbReference>
<dbReference type="GO" id="GO:0033572">
    <property type="term" value="P:transferrin transport"/>
    <property type="evidence" value="ECO:0000315"/>
    <property type="project" value="UniProtKB"/>
</dbReference>
<dbReference type="CDD" id="cd01868">
    <property type="entry name" value="Rab11_like"/>
    <property type="match status" value="1"/>
</dbReference>
<dbReference type="FunFam" id="3.40.50.300:FF:000085">
    <property type="entry name" value="Putative ras-related protein rab-11a"/>
    <property type="match status" value="1"/>
</dbReference>
<dbReference type="Gene3D" id="3.40.50.300">
    <property type="entry name" value="P-loop containing nucleotide triphosphate hydrolases"/>
    <property type="match status" value="1"/>
</dbReference>
<dbReference type="InterPro" id="IPR027417">
    <property type="entry name" value="P-loop_NTPase"/>
</dbReference>
<dbReference type="InterPro" id="IPR050209">
    <property type="entry name" value="Rab_GTPases_membrane_traffic"/>
</dbReference>
<dbReference type="InterPro" id="IPR005225">
    <property type="entry name" value="Small_GTP-bd"/>
</dbReference>
<dbReference type="InterPro" id="IPR001806">
    <property type="entry name" value="Small_GTPase"/>
</dbReference>
<dbReference type="NCBIfam" id="TIGR00231">
    <property type="entry name" value="small_GTP"/>
    <property type="match status" value="1"/>
</dbReference>
<dbReference type="PANTHER" id="PTHR47979">
    <property type="entry name" value="DRAB11-RELATED"/>
    <property type="match status" value="1"/>
</dbReference>
<dbReference type="Pfam" id="PF00071">
    <property type="entry name" value="Ras"/>
    <property type="match status" value="1"/>
</dbReference>
<dbReference type="PRINTS" id="PR00449">
    <property type="entry name" value="RASTRNSFRMNG"/>
</dbReference>
<dbReference type="SMART" id="SM00175">
    <property type="entry name" value="RAB"/>
    <property type="match status" value="1"/>
</dbReference>
<dbReference type="SMART" id="SM00176">
    <property type="entry name" value="RAN"/>
    <property type="match status" value="1"/>
</dbReference>
<dbReference type="SMART" id="SM00173">
    <property type="entry name" value="RAS"/>
    <property type="match status" value="1"/>
</dbReference>
<dbReference type="SMART" id="SM00174">
    <property type="entry name" value="RHO"/>
    <property type="match status" value="1"/>
</dbReference>
<dbReference type="SUPFAM" id="SSF52540">
    <property type="entry name" value="P-loop containing nucleoside triphosphate hydrolases"/>
    <property type="match status" value="1"/>
</dbReference>
<dbReference type="PROSITE" id="PS51419">
    <property type="entry name" value="RAB"/>
    <property type="match status" value="1"/>
</dbReference>
<comment type="function">
    <text evidence="3 5 6 7 8">The small GTPases Rab are key regulators of intracellular membrane trafficking, from the formation of transport vesicles to their fusion with membranes. Rabs cycle between an inactive GDP-bound form and an active GTP-bound form that is able to recruit to membranes different set of downstream effectors directly responsible for vesicle formation, movement, tethering and fusion. The small Rab GTPase RAB11B plays a role in endocytic recycling, regulating apical recycling of several transmembrane proteins including cystic fibrosis transmembrane conductance regulator/CFTR, epithelial sodium channel/ENaC, potassium voltage-gated channel, and voltage-dependent L-type calcium channel. May also regulate constitutive and regulated secretion, like insulin granule exocytosis. Required for melanosome transport and release from melanocytes. Also regulates V-ATPase intracellular transport in response to extracellular acidosis. Promotes Rabin8/RAB3IP preciliary vesicular trafficking to mother centriole by forming a ciliary targeting complex containing Rab11, ASAP1, Rabin8/RAB3IP, RAB11FIP3 and ARF4, thereby regulating ciliogenesis initiation. On the contrary, upon LPAR1 receptor signaling pathway activation, interaction with phosphorylated WDR44 prevents Rab11-RAB3IP-RAB11FIP3 complex formation and cilia growth (By similarity).</text>
</comment>
<comment type="catalytic activity">
    <reaction evidence="5">
        <text>GTP + H2O = GDP + phosphate + H(+)</text>
        <dbReference type="Rhea" id="RHEA:19669"/>
        <dbReference type="ChEBI" id="CHEBI:15377"/>
        <dbReference type="ChEBI" id="CHEBI:15378"/>
        <dbReference type="ChEBI" id="CHEBI:37565"/>
        <dbReference type="ChEBI" id="CHEBI:43474"/>
        <dbReference type="ChEBI" id="CHEBI:58189"/>
        <dbReference type="EC" id="3.6.5.2"/>
    </reaction>
    <physiologicalReaction direction="left-to-right" evidence="5">
        <dbReference type="Rhea" id="RHEA:19670"/>
    </physiologicalReaction>
</comment>
<comment type="cofactor">
    <cofactor evidence="3">
        <name>Mg(2+)</name>
        <dbReference type="ChEBI" id="CHEBI:18420"/>
    </cofactor>
</comment>
<comment type="activity regulation">
    <text evidence="12">Regulated by guanine nucleotide exchange factors (GEFs) which promote the exchange of bound GDP for free GTP. Regulated by GTPase activating proteins (GAPs) which increase the GTP hydrolysis activity. Inhibited by GDP dissociation inhibitors (GDIs) which prevent Rab-GDP dissociation.</text>
</comment>
<comment type="subunit">
    <text evidence="3 9 11">Interacts with KCNMA1 (PubMed:22935415). Interacts with RAB11FIP1, RAB11FIP2, RAB11FIP3 and RAB11FIP4 (By similarity). May interact with TBC1D14 (By similarity). Interacts with ATP6V1E1 (By similarity). Interacts with PI4KB (By similarity). Interacts (GDP-bound form) with ZFYVE27 (By similarity). Interacts (GDP-bound form) with KIF5A in a ZFYVE27-dependent manner (By similarity). Interacts with RELCH (PubMed:29514919). Interacts (in GTP-bound form) with TBC1D8B (via domain Rab-GAP TBC) (By similarity). Forms a complex containing RAB11B, ASAP1, Rabin8/RAB3IP, RAP11FIP3 and ARF4. Interacts with WDR44 (By similarity).</text>
</comment>
<comment type="interaction">
    <interactant intactId="EBI-1634944">
        <id>P46638</id>
    </interactant>
    <interactant intactId="EBI-6512684">
        <id>C3VLD3</id>
        <label>Kcnma1</label>
    </interactant>
    <organismsDiffer>false</organismsDiffer>
    <experiments>4</experiments>
</comment>
<comment type="subcellular location">
    <subcellularLocation>
        <location evidence="13">Recycling endosome membrane</location>
        <topology evidence="13">Lipid-anchor</topology>
        <orientation evidence="13">Cytoplasmic side</orientation>
    </subcellularLocation>
    <subcellularLocation>
        <location evidence="1">Cytoplasmic vesicle</location>
        <location evidence="1">Secretory vesicle</location>
        <location evidence="1">Synaptic vesicle membrane</location>
        <topology evidence="1">Lipid-anchor</topology>
        <orientation evidence="1">Cytoplasmic side</orientation>
    </subcellularLocation>
    <subcellularLocation>
        <location evidence="3">Cytoplasmic vesicle</location>
        <location evidence="3">Phagosome membrane</location>
        <topology evidence="3">Lipid-anchor</topology>
        <orientation evidence="3">Cytoplasmic side</orientation>
    </subcellularLocation>
    <subcellularLocation>
        <location evidence="3">Cytoplasmic vesicle</location>
    </subcellularLocation>
    <text evidence="3">Colocalizes with RAB11AFIP1 on punctate vesicles.</text>
</comment>
<comment type="tissue specificity">
    <text evidence="6">Abundantly expressed in brain, heart and testis. Also detected in kidney and pancreatic islets.</text>
</comment>
<comment type="domain">
    <text evidence="3">Switch 1, switch 2 and the interswitch regions are characteristic of Rab GTPases and mediate the interactions with Rab downstream effectors. The switch regions undergo conformational changes upon nucleotide binding which drives interaction with specific sets of effector proteins, with most effectors only binding to GTP-bound Rab.</text>
</comment>
<comment type="PTM">
    <text evidence="10">Citrullinated by PADI4.</text>
</comment>
<comment type="similarity">
    <text evidence="12">Belongs to the small GTPase superfamily. Rab family.</text>
</comment>